<feature type="chain" id="PRO_0000099354" description="Poxin">
    <location>
        <begin position="1"/>
        <end position="219"/>
    </location>
</feature>
<feature type="active site" description="Proton donor" evidence="1 2">
    <location>
        <position position="17"/>
    </location>
</feature>
<feature type="active site" description="Shared with catalytic histidine of dimeric partner" evidence="1 2">
    <location>
        <position position="138"/>
    </location>
</feature>
<feature type="active site" description="Proton acceptor; shared with catalytic histidine of dimeric partner" evidence="1 2">
    <location>
        <position position="142"/>
    </location>
</feature>
<feature type="site" description="Substrate binding" evidence="1 2">
    <location>
        <position position="60"/>
    </location>
</feature>
<feature type="site" description="Substrate binding" evidence="1 2">
    <location>
        <position position="105"/>
    </location>
</feature>
<feature type="site" description="Substrate binding" evidence="1 2">
    <location>
        <position position="149"/>
    </location>
</feature>
<feature type="site" description="Substrate binding" evidence="1 2">
    <location>
        <position position="169"/>
    </location>
</feature>
<feature type="site" description="Substrate binding" evidence="1 2">
    <location>
        <position position="182"/>
    </location>
</feature>
<feature type="site" description="Substrate binding" evidence="1 2">
    <location>
        <position position="184"/>
    </location>
</feature>
<feature type="site" description="Substrate binding" evidence="1 2">
    <location>
        <position position="186"/>
    </location>
</feature>
<feature type="mutagenesis site" description="Complete loss of 2',3'-cGAMP cleavage." evidence="2">
    <original>H</original>
    <variation>A</variation>
    <location>
        <position position="17"/>
    </location>
</feature>
<feature type="mutagenesis site" description="Stalls the 2',3'-cGAMP cleavage reaction at an intermediary stage." evidence="2">
    <original>R</original>
    <variation>A</variation>
    <location>
        <position position="60"/>
    </location>
</feature>
<feature type="mutagenesis site" description="Stalls the 2',3'-cGAMP cleavage reaction at an intermediary stage." evidence="2">
    <original>Y</original>
    <variation>A</variation>
    <location>
        <position position="138"/>
    </location>
</feature>
<feature type="mutagenesis site" description="Complete loss of 2',3'-cGAMP cleavage." evidence="2">
    <original>K</original>
    <variation>A</variation>
    <location>
        <position position="142"/>
    </location>
</feature>
<feature type="mutagenesis site" description="No effect on 2',3'-cGAMP cleavage reaction." evidence="2">
    <original>Q</original>
    <variation>A</variation>
    <location>
        <position position="169"/>
    </location>
</feature>
<feature type="mutagenesis site" description="Stalls the 2',3'-cGAMP cleavage reaction at an intermediary stage." evidence="2">
    <original>R</original>
    <variation>A</variation>
    <location>
        <position position="182"/>
    </location>
</feature>
<feature type="mutagenesis site" description="Complete loss of 2',3'-cGAMP cleavage." evidence="2">
    <original>R</original>
    <variation>A</variation>
    <location>
        <position position="184"/>
    </location>
</feature>
<feature type="mutagenesis site" description="Stalls the 2',3'-cGAMP cleavage reaction at an intermediary stage." evidence="2">
    <original>K</original>
    <variation>A</variation>
    <location>
        <position position="186"/>
    </location>
</feature>
<feature type="strand" evidence="5">
    <location>
        <begin position="4"/>
        <end position="6"/>
    </location>
</feature>
<feature type="helix" evidence="5">
    <location>
        <begin position="7"/>
        <end position="9"/>
    </location>
</feature>
<feature type="strand" evidence="5">
    <location>
        <begin position="16"/>
        <end position="19"/>
    </location>
</feature>
<feature type="strand" evidence="5">
    <location>
        <begin position="22"/>
        <end position="26"/>
    </location>
</feature>
<feature type="helix" evidence="5">
    <location>
        <begin position="30"/>
        <end position="32"/>
    </location>
</feature>
<feature type="strand" evidence="5">
    <location>
        <begin position="34"/>
        <end position="38"/>
    </location>
</feature>
<feature type="strand" evidence="5">
    <location>
        <begin position="41"/>
        <end position="45"/>
    </location>
</feature>
<feature type="strand" evidence="5">
    <location>
        <begin position="50"/>
        <end position="57"/>
    </location>
</feature>
<feature type="strand" evidence="5">
    <location>
        <begin position="60"/>
        <end position="66"/>
    </location>
</feature>
<feature type="strand" evidence="5">
    <location>
        <begin position="68"/>
        <end position="70"/>
    </location>
</feature>
<feature type="strand" evidence="5">
    <location>
        <begin position="80"/>
        <end position="82"/>
    </location>
</feature>
<feature type="strand" evidence="5">
    <location>
        <begin position="88"/>
        <end position="91"/>
    </location>
</feature>
<feature type="strand" evidence="5">
    <location>
        <begin position="99"/>
        <end position="101"/>
    </location>
</feature>
<feature type="strand" evidence="5">
    <location>
        <begin position="107"/>
        <end position="113"/>
    </location>
</feature>
<feature type="strand" evidence="5">
    <location>
        <begin position="118"/>
        <end position="124"/>
    </location>
</feature>
<feature type="strand" evidence="5">
    <location>
        <begin position="129"/>
        <end position="131"/>
    </location>
</feature>
<feature type="strand" evidence="5">
    <location>
        <begin position="134"/>
        <end position="136"/>
    </location>
</feature>
<feature type="helix" evidence="5">
    <location>
        <begin position="138"/>
        <end position="149"/>
    </location>
</feature>
<feature type="strand" evidence="5">
    <location>
        <begin position="158"/>
        <end position="166"/>
    </location>
</feature>
<feature type="strand" evidence="5">
    <location>
        <begin position="168"/>
        <end position="173"/>
    </location>
</feature>
<feature type="strand" evidence="5">
    <location>
        <begin position="179"/>
        <end position="185"/>
    </location>
</feature>
<protein>
    <recommendedName>
        <fullName evidence="1 3">Poxin</fullName>
        <ecNumber evidence="1 2">3.1.-.-</ecNumber>
    </recommendedName>
    <alternativeName>
        <fullName evidence="3">Immune nuclease</fullName>
    </alternativeName>
    <alternativeName>
        <fullName>Protein B2</fullName>
    </alternativeName>
</protein>
<keyword id="KW-0002">3D-structure</keyword>
<keyword id="KW-0244">Early protein</keyword>
<keyword id="KW-0378">Hydrolase</keyword>
<keyword id="KW-0540">Nuclease</keyword>
<keyword id="KW-1185">Reference proteome</keyword>
<evidence type="ECO:0000255" key="1">
    <source>
        <dbReference type="HAMAP-Rule" id="MF_04143"/>
    </source>
</evidence>
<evidence type="ECO:0000269" key="2">
    <source>
    </source>
</evidence>
<evidence type="ECO:0000303" key="3">
    <source>
    </source>
</evidence>
<evidence type="ECO:0000305" key="4">
    <source>
    </source>
</evidence>
<evidence type="ECO:0007829" key="5">
    <source>
        <dbReference type="PDB" id="6EA6"/>
    </source>
</evidence>
<sequence length="219" mass="24625">MAMFYAHALGGYDENLHAFPGISSTVANDVRKYSVVSVYNNKYDIVKDKYMWCYSQVNKRYIGALLPMFECNEYLQIGDPIHDQEGNQISIITYRHKNYYALSGIGYESLDLCLEGVGIHHHVLETGNAVYGKVQHDYSTIKEKAKEMNALSPGPIIDYHVWIGDCICQVTAVDVHGKEIMRMRFKKGAVLPIPNLVKVKLGENDTENLSSTISAAPSR</sequence>
<dbReference type="EC" id="3.1.-.-" evidence="1 2"/>
<dbReference type="EMBL" id="D11079">
    <property type="protein sequence ID" value="BAA01832.1"/>
    <property type="molecule type" value="Genomic_DNA"/>
</dbReference>
<dbReference type="EMBL" id="AY243312">
    <property type="protein sequence ID" value="AAO89463.1"/>
    <property type="molecule type" value="Genomic_DNA"/>
</dbReference>
<dbReference type="PIR" id="JQ1796">
    <property type="entry name" value="JQ1796"/>
</dbReference>
<dbReference type="RefSeq" id="YP_233066.1">
    <property type="nucleotide sequence ID" value="NC_006998.1"/>
</dbReference>
<dbReference type="PDB" id="6EA6">
    <property type="method" value="X-ray"/>
    <property type="resolution" value="1.70 A"/>
    <property type="chains" value="A/B/C/D=1-219"/>
</dbReference>
<dbReference type="PDB" id="6EA8">
    <property type="method" value="X-ray"/>
    <property type="resolution" value="2.60 A"/>
    <property type="chains" value="A/B/C/D/E/F/G/H/I/J=1-219"/>
</dbReference>
<dbReference type="PDB" id="6EA9">
    <property type="method" value="X-ray"/>
    <property type="resolution" value="2.10 A"/>
    <property type="chains" value="A/B/C/D/E=1-219"/>
</dbReference>
<dbReference type="PDBsum" id="6EA6"/>
<dbReference type="PDBsum" id="6EA8"/>
<dbReference type="PDBsum" id="6EA9"/>
<dbReference type="SMR" id="Q01225"/>
<dbReference type="DNASU" id="3707655"/>
<dbReference type="GeneID" id="3707655"/>
<dbReference type="KEGG" id="vg:3707655"/>
<dbReference type="Proteomes" id="UP000000344">
    <property type="component" value="Genome"/>
</dbReference>
<dbReference type="GO" id="GO:0030430">
    <property type="term" value="C:host cell cytoplasm"/>
    <property type="evidence" value="ECO:0000305"/>
    <property type="project" value="UniProt"/>
</dbReference>
<dbReference type="GO" id="GO:0061507">
    <property type="term" value="F:2',3'-cyclic GMP-AMP binding"/>
    <property type="evidence" value="ECO:0000315"/>
    <property type="project" value="UniProtKB"/>
</dbReference>
<dbReference type="GO" id="GO:0004518">
    <property type="term" value="F:nuclease activity"/>
    <property type="evidence" value="ECO:0000314"/>
    <property type="project" value="UniProt"/>
</dbReference>
<dbReference type="GO" id="GO:0052170">
    <property type="term" value="P:symbiont-mediated suppression of host innate immune response"/>
    <property type="evidence" value="ECO:0000314"/>
    <property type="project" value="UniProt"/>
</dbReference>
<dbReference type="HAMAP" id="MF_04143">
    <property type="entry name" value="Poxins"/>
    <property type="match status" value="1"/>
</dbReference>
<dbReference type="InterPro" id="IPR006853">
    <property type="entry name" value="Poxin_vir"/>
</dbReference>
<dbReference type="Pfam" id="PF04766">
    <property type="entry name" value="Baculo_p26"/>
    <property type="match status" value="1"/>
</dbReference>
<name>POXIN_VACCW</name>
<comment type="function">
    <text evidence="2">Nuclease that is responsible for viral evasion of host cGAS-STING innate immunity (PubMed:30728498). Cleaves 2',3'-cGAMP which is produced by host cGAS following recognition of cytosolic DNA and blocks the subsequent 2',3'-cGAMP-mediated activation of TMEM173/STING, which normally spreads to adjacent cells and activates the interferon and NF-kappa-B immune responses (PubMed:30728498).</text>
</comment>
<comment type="catalytic activity">
    <reaction evidence="1 2">
        <text>2',3'-cGAMP + H2O = Gp(2'-5')Ap(3') + H(+)</text>
        <dbReference type="Rhea" id="RHEA:59472"/>
        <dbReference type="ChEBI" id="CHEBI:15377"/>
        <dbReference type="ChEBI" id="CHEBI:15378"/>
        <dbReference type="ChEBI" id="CHEBI:143093"/>
        <dbReference type="ChEBI" id="CHEBI:143098"/>
    </reaction>
    <physiologicalReaction direction="left-to-right" evidence="1 4">
        <dbReference type="Rhea" id="RHEA:59473"/>
    </physiologicalReaction>
</comment>
<comment type="subunit">
    <text evidence="1 2">Homodimer.</text>
</comment>
<comment type="induction">
    <text>Expressed in the early phase of the viral replicative cycle.</text>
</comment>
<comment type="domain">
    <text evidence="1 2">The substrate binding site is formed by the N-terminus of a monomer and the C-terminus of the opposite monomer.</text>
</comment>
<comment type="disruption phenotype">
    <text evidence="2">Knockout induces a 40 fold decreased replication of the virus.</text>
</comment>
<comment type="similarity">
    <text evidence="1">Belongs to the poxin family.</text>
</comment>
<proteinExistence type="evidence at protein level"/>
<organismHost>
    <name type="scientific">Bos taurus</name>
    <name type="common">Bovine</name>
    <dbReference type="NCBI Taxonomy" id="9913"/>
</organismHost>
<gene>
    <name type="primary">OPG188</name>
    <name type="ordered locus">VACWR184</name>
    <name type="ORF">B2R</name>
</gene>
<organism>
    <name type="scientific">Vaccinia virus (strain Western Reserve)</name>
    <name type="common">VACV</name>
    <name type="synonym">Vaccinia virus (strain WR)</name>
    <dbReference type="NCBI Taxonomy" id="10254"/>
    <lineage>
        <taxon>Viruses</taxon>
        <taxon>Varidnaviria</taxon>
        <taxon>Bamfordvirae</taxon>
        <taxon>Nucleocytoviricota</taxon>
        <taxon>Pokkesviricetes</taxon>
        <taxon>Chitovirales</taxon>
        <taxon>Poxviridae</taxon>
        <taxon>Chordopoxvirinae</taxon>
        <taxon>Orthopoxvirus</taxon>
        <taxon>Vaccinia virus</taxon>
    </lineage>
</organism>
<accession>Q01225</accession>
<accession>Q76ZM1</accession>
<reference key="1">
    <citation type="journal article" date="1991" name="J. Gen. Virol.">
        <title>Nucleotide sequence of 42 kbp of vaccinia virus strain WR from near the right inverted terminal repeat.</title>
        <authorList>
            <person name="Smith G.L."/>
            <person name="Chan Y.S."/>
            <person name="Howard S.T."/>
        </authorList>
    </citation>
    <scope>NUCLEOTIDE SEQUENCE [GENOMIC DNA]</scope>
</reference>
<reference key="2">
    <citation type="submission" date="2003-02" db="EMBL/GenBank/DDBJ databases">
        <title>Sequencing of the coding region of Vaccinia-WR to an average 9-fold redundancy and an error rate of 0.16/10kb.</title>
        <authorList>
            <person name="Esposito J.J."/>
            <person name="Frace A.M."/>
            <person name="Sammons S.A."/>
            <person name="Olsen-Rasmussen M."/>
            <person name="Osborne J."/>
            <person name="Wohlhueter R."/>
        </authorList>
    </citation>
    <scope>NUCLEOTIDE SEQUENCE [LARGE SCALE GENOMIC DNA]</scope>
</reference>
<reference key="3">
    <citation type="journal article" date="2019" name="Nature">
        <title>Viral and metazoan poxins are cGAMP-specific nucleases that restrict cGAS-STING signalling.</title>
        <authorList>
            <person name="Eaglesham J.B."/>
            <person name="Pan Y."/>
            <person name="Kupper T.S."/>
            <person name="Kranzusch P.J."/>
        </authorList>
    </citation>
    <scope>X-RAY CRYSTALLOGRAPHY (1.70 ANGSTROMS) IN COMPLEX WITH NONHYDROLYZABLE 2'3' CGAMP</scope>
    <scope>FUNCTION</scope>
    <scope>DOMAIN</scope>
    <scope>CATALYTIC ACTIVITY</scope>
    <scope>SUBUNIT</scope>
    <scope>ACTIVE SITE</scope>
    <scope>DISRUPTION PHENOTYPE</scope>
    <scope>MUTAGENESIS OF HIS-17; ARG-60; TYR-138; LYS-142; GLN-169; ARG-182; ARG-184 AND LYS-186</scope>
    <scope>REACTION MECHANISM</scope>
</reference>